<keyword id="KW-0175">Coiled coil</keyword>
<keyword id="KW-1015">Disulfide bond</keyword>
<keyword id="KW-0325">Glycoprotein</keyword>
<keyword id="KW-1267">Proteomics identification</keyword>
<keyword id="KW-1185">Reference proteome</keyword>
<keyword id="KW-0964">Secreted</keyword>
<keyword id="KW-0732">Signal</keyword>
<gene>
    <name type="primary">FGL2</name>
</gene>
<feature type="signal peptide" evidence="1">
    <location>
        <begin position="1"/>
        <end position="23"/>
    </location>
</feature>
<feature type="chain" id="PRO_0000009106" description="Fibroleukin">
    <location>
        <begin position="24"/>
        <end position="439"/>
    </location>
</feature>
<feature type="domain" description="Fibrinogen C-terminal" evidence="2">
    <location>
        <begin position="204"/>
        <end position="436"/>
    </location>
</feature>
<feature type="region of interest" description="Disordered" evidence="3">
    <location>
        <begin position="103"/>
        <end position="126"/>
    </location>
</feature>
<feature type="coiled-coil region" evidence="1">
    <location>
        <begin position="73"/>
        <end position="165"/>
    </location>
</feature>
<feature type="glycosylation site" description="N-linked (GlcNAc...) asparagine" evidence="1">
    <location>
        <position position="25"/>
    </location>
</feature>
<feature type="glycosylation site" description="N-linked (GlcNAc...) asparagine" evidence="4 5">
    <location>
        <position position="179"/>
    </location>
</feature>
<feature type="glycosylation site" description="N-linked (GlcNAc...) asparagine" evidence="1">
    <location>
        <position position="235"/>
    </location>
</feature>
<feature type="glycosylation site" description="N-linked (GlcNAc...) asparagine" evidence="1">
    <location>
        <position position="263"/>
    </location>
</feature>
<feature type="glycosylation site" description="N-linked (GlcNAc...) asparagine" evidence="4 5">
    <location>
        <position position="336"/>
    </location>
</feature>
<feature type="disulfide bond" evidence="2">
    <location>
        <begin position="213"/>
        <end position="242"/>
    </location>
</feature>
<feature type="disulfide bond" evidence="2">
    <location>
        <begin position="371"/>
        <end position="384"/>
    </location>
</feature>
<feature type="sequence variant" id="VAR_013066" description="In dbSNP:rs2075761." evidence="6">
    <original>G</original>
    <variation>E</variation>
    <location>
        <position position="53"/>
    </location>
</feature>
<name>FGL2_HUMAN</name>
<reference key="1">
    <citation type="journal article" date="1995" name="Gene">
        <title>Sequence of a human transcript expressed in T-lymphocytes and encoding a fibrinogen-like protein.</title>
        <authorList>
            <person name="Ruegg C."/>
            <person name="Pytela R."/>
        </authorList>
    </citation>
    <scope>NUCLEOTIDE SEQUENCE [MRNA]</scope>
    <source>
        <tissue>Small intestine</tissue>
    </source>
</reference>
<reference key="2">
    <citation type="submission" date="1998-11" db="EMBL/GenBank/DDBJ databases">
        <title>Cloning and characterization of Hfgl2: the human counterpart to the mouse gene Fgl2.</title>
        <authorList>
            <person name="Yuwaraj S."/>
            <person name="Liu M."/>
            <person name="Marsden P."/>
            <person name="Levy G."/>
        </authorList>
    </citation>
    <scope>NUCLEOTIDE SEQUENCE [GENOMIC DNA]</scope>
</reference>
<reference key="3">
    <citation type="submission" date="2002-01" db="EMBL/GenBank/DDBJ databases">
        <authorList>
            <consortium name="SeattleSNPs variation discovery resource"/>
        </authorList>
    </citation>
    <scope>NUCLEOTIDE SEQUENCE [GENOMIC DNA]</scope>
    <scope>VARIANT GLU-53</scope>
</reference>
<reference key="4">
    <citation type="journal article" date="2004" name="Genome Res.">
        <title>The status, quality, and expansion of the NIH full-length cDNA project: the Mammalian Gene Collection (MGC).</title>
        <authorList>
            <consortium name="The MGC Project Team"/>
        </authorList>
    </citation>
    <scope>NUCLEOTIDE SEQUENCE [LARGE SCALE MRNA]</scope>
    <source>
        <tissue>Blood</tissue>
        <tissue>Pancreas</tissue>
    </source>
</reference>
<reference key="5">
    <citation type="journal article" date="1998" name="J. Immunol.">
        <title>Characterization of human fibroleukin, a fibrinogen-like protein secreted by T lymphocytes.</title>
        <authorList>
            <person name="Marazzi S."/>
            <person name="Blum S."/>
            <person name="Hartmann R."/>
            <person name="Gundersen D."/>
            <person name="Schreyer M."/>
            <person name="Argraves S."/>
            <person name="von Fliedner V."/>
            <person name="Pytela R."/>
            <person name="Ruegg C."/>
        </authorList>
    </citation>
    <scope>CHARACTERIZATION</scope>
</reference>
<reference key="6">
    <citation type="journal article" date="2005" name="J. Proteome Res.">
        <title>Human plasma N-glycoproteome analysis by immunoaffinity subtraction, hydrazide chemistry, and mass spectrometry.</title>
        <authorList>
            <person name="Liu T."/>
            <person name="Qian W.-J."/>
            <person name="Gritsenko M.A."/>
            <person name="Camp D.G. II"/>
            <person name="Monroe M.E."/>
            <person name="Moore R.J."/>
            <person name="Smith R.D."/>
        </authorList>
    </citation>
    <scope>GLYCOSYLATION [LARGE SCALE ANALYSIS] AT ASN-179 AND ASN-336</scope>
    <source>
        <tissue>Plasma</tissue>
    </source>
</reference>
<reference key="7">
    <citation type="journal article" date="2009" name="J. Proteome Res.">
        <title>Glycoproteomics analysis of human liver tissue by combination of multiple enzyme digestion and hydrazide chemistry.</title>
        <authorList>
            <person name="Chen R."/>
            <person name="Jiang X."/>
            <person name="Sun D."/>
            <person name="Han G."/>
            <person name="Wang F."/>
            <person name="Ye M."/>
            <person name="Wang L."/>
            <person name="Zou H."/>
        </authorList>
    </citation>
    <scope>GLYCOSYLATION [LARGE SCALE ANALYSIS] AT ASN-179 AND ASN-336</scope>
    <source>
        <tissue>Liver</tissue>
    </source>
</reference>
<protein>
    <recommendedName>
        <fullName>Fibroleukin</fullName>
    </recommendedName>
    <alternativeName>
        <fullName>Fibrinogen-like protein 2</fullName>
    </alternativeName>
    <alternativeName>
        <fullName>pT49</fullName>
    </alternativeName>
</protein>
<accession>Q14314</accession>
<comment type="function">
    <text>May play a role in physiologic lymphocyte functions at mucosal sites.</text>
</comment>
<comment type="subunit">
    <text>Homotetramer; disulfide-linked.</text>
</comment>
<comment type="interaction">
    <interactant intactId="EBI-21370828">
        <id>Q14314</id>
    </interactant>
    <interactant intactId="EBI-349854">
        <id>P13569</id>
        <label>CFTR</label>
    </interactant>
    <organismsDiffer>false</organismsDiffer>
    <experiments>6</experiments>
</comment>
<comment type="subcellular location">
    <subcellularLocation>
        <location>Secreted</location>
    </subcellularLocation>
</comment>
<comment type="tissue specificity">
    <text>Constitutively expressed in cytotoxic T-cells.</text>
</comment>
<evidence type="ECO:0000255" key="1"/>
<evidence type="ECO:0000255" key="2">
    <source>
        <dbReference type="PROSITE-ProRule" id="PRU00739"/>
    </source>
</evidence>
<evidence type="ECO:0000256" key="3">
    <source>
        <dbReference type="SAM" id="MobiDB-lite"/>
    </source>
</evidence>
<evidence type="ECO:0000269" key="4">
    <source>
    </source>
</evidence>
<evidence type="ECO:0000269" key="5">
    <source>
    </source>
</evidence>
<evidence type="ECO:0000269" key="6">
    <source ref="3"/>
</evidence>
<dbReference type="EMBL" id="Z36531">
    <property type="protein sequence ID" value="CAA85298.1"/>
    <property type="molecule type" value="mRNA"/>
</dbReference>
<dbReference type="EMBL" id="AF104015">
    <property type="protein sequence ID" value="AAD10825.1"/>
    <property type="molecule type" value="Genomic_DNA"/>
</dbReference>
<dbReference type="EMBL" id="AF104014">
    <property type="protein sequence ID" value="AAD10825.1"/>
    <property type="status" value="JOINED"/>
    <property type="molecule type" value="Genomic_DNA"/>
</dbReference>
<dbReference type="EMBL" id="AF468959">
    <property type="protein sequence ID" value="AAL68855.1"/>
    <property type="molecule type" value="Genomic_DNA"/>
</dbReference>
<dbReference type="EMBL" id="BC033820">
    <property type="protein sequence ID" value="AAH33820.1"/>
    <property type="molecule type" value="mRNA"/>
</dbReference>
<dbReference type="EMBL" id="BC073986">
    <property type="protein sequence ID" value="AAH73986.1"/>
    <property type="molecule type" value="mRNA"/>
</dbReference>
<dbReference type="CCDS" id="CCDS5591.1"/>
<dbReference type="PIR" id="I37391">
    <property type="entry name" value="I37391"/>
</dbReference>
<dbReference type="RefSeq" id="NP_006673.1">
    <property type="nucleotide sequence ID" value="NM_006682.3"/>
</dbReference>
<dbReference type="SMR" id="Q14314"/>
<dbReference type="BioGRID" id="116083">
    <property type="interactions" value="15"/>
</dbReference>
<dbReference type="FunCoup" id="Q14314">
    <property type="interactions" value="132"/>
</dbReference>
<dbReference type="IntAct" id="Q14314">
    <property type="interactions" value="16"/>
</dbReference>
<dbReference type="MINT" id="Q14314"/>
<dbReference type="STRING" id="9606.ENSP00000248598"/>
<dbReference type="GlyConnect" id="1241">
    <property type="glycosylation" value="18 N-Linked glycans (3 sites)"/>
</dbReference>
<dbReference type="GlyCosmos" id="Q14314">
    <property type="glycosylation" value="7 sites, 20 glycans"/>
</dbReference>
<dbReference type="GlyGen" id="Q14314">
    <property type="glycosylation" value="7 sites, 122 N-linked glycans (4 sites), 3 O-linked glycans (2 sites)"/>
</dbReference>
<dbReference type="iPTMnet" id="Q14314"/>
<dbReference type="PhosphoSitePlus" id="Q14314"/>
<dbReference type="BioMuta" id="FGL2"/>
<dbReference type="DMDM" id="12230074"/>
<dbReference type="REPRODUCTION-2DPAGE" id="Q14314"/>
<dbReference type="CPTAC" id="CPTAC-2213"/>
<dbReference type="CPTAC" id="CPTAC-2214"/>
<dbReference type="jPOST" id="Q14314"/>
<dbReference type="MassIVE" id="Q14314"/>
<dbReference type="PaxDb" id="9606-ENSP00000248598"/>
<dbReference type="PeptideAtlas" id="Q14314"/>
<dbReference type="ProteomicsDB" id="59959"/>
<dbReference type="Antibodypedia" id="15028">
    <property type="antibodies" value="378 antibodies from 31 providers"/>
</dbReference>
<dbReference type="DNASU" id="10875"/>
<dbReference type="Ensembl" id="ENST00000248598.6">
    <property type="protein sequence ID" value="ENSP00000248598.5"/>
    <property type="gene ID" value="ENSG00000127951.8"/>
</dbReference>
<dbReference type="GeneID" id="10875"/>
<dbReference type="KEGG" id="hsa:10875"/>
<dbReference type="MANE-Select" id="ENST00000248598.6">
    <property type="protein sequence ID" value="ENSP00000248598.5"/>
    <property type="RefSeq nucleotide sequence ID" value="NM_006682.3"/>
    <property type="RefSeq protein sequence ID" value="NP_006673.1"/>
</dbReference>
<dbReference type="UCSC" id="uc003ugb.4">
    <property type="organism name" value="human"/>
</dbReference>
<dbReference type="AGR" id="HGNC:3696"/>
<dbReference type="CTD" id="10875"/>
<dbReference type="DisGeNET" id="10875"/>
<dbReference type="GeneCards" id="FGL2"/>
<dbReference type="HGNC" id="HGNC:3696">
    <property type="gene designation" value="FGL2"/>
</dbReference>
<dbReference type="HPA" id="ENSG00000127951">
    <property type="expression patterns" value="Tissue enhanced (lymphoid)"/>
</dbReference>
<dbReference type="MIM" id="605351">
    <property type="type" value="gene"/>
</dbReference>
<dbReference type="neXtProt" id="NX_Q14314"/>
<dbReference type="OpenTargets" id="ENSG00000127951"/>
<dbReference type="PharmGKB" id="PA28134"/>
<dbReference type="VEuPathDB" id="HostDB:ENSG00000127951"/>
<dbReference type="eggNOG" id="KOG2579">
    <property type="taxonomic scope" value="Eukaryota"/>
</dbReference>
<dbReference type="GeneTree" id="ENSGT00940000157946"/>
<dbReference type="HOGENOM" id="CLU_038628_3_0_1"/>
<dbReference type="InParanoid" id="Q14314"/>
<dbReference type="OMA" id="MQRDCAD"/>
<dbReference type="OrthoDB" id="6514358at2759"/>
<dbReference type="PAN-GO" id="Q14314">
    <property type="GO annotations" value="3 GO annotations based on evolutionary models"/>
</dbReference>
<dbReference type="PhylomeDB" id="Q14314"/>
<dbReference type="TreeFam" id="TF336658"/>
<dbReference type="PathwayCommons" id="Q14314"/>
<dbReference type="Reactome" id="R-HSA-6798695">
    <property type="pathway name" value="Neutrophil degranulation"/>
</dbReference>
<dbReference type="SignaLink" id="Q14314"/>
<dbReference type="BioGRID-ORCS" id="10875">
    <property type="hits" value="10 hits in 1142 CRISPR screens"/>
</dbReference>
<dbReference type="ChiTaRS" id="FGL2">
    <property type="organism name" value="human"/>
</dbReference>
<dbReference type="GeneWiki" id="FGL2"/>
<dbReference type="GenomeRNAi" id="10875"/>
<dbReference type="Pharos" id="Q14314">
    <property type="development level" value="Tbio"/>
</dbReference>
<dbReference type="PRO" id="PR:Q14314"/>
<dbReference type="Proteomes" id="UP000005640">
    <property type="component" value="Chromosome 7"/>
</dbReference>
<dbReference type="RNAct" id="Q14314">
    <property type="molecule type" value="protein"/>
</dbReference>
<dbReference type="Bgee" id="ENSG00000127951">
    <property type="expression patterns" value="Expressed in monocyte and 197 other cell types or tissues"/>
</dbReference>
<dbReference type="ExpressionAtlas" id="Q14314">
    <property type="expression patterns" value="baseline and differential"/>
</dbReference>
<dbReference type="GO" id="GO:0062023">
    <property type="term" value="C:collagen-containing extracellular matrix"/>
    <property type="evidence" value="ECO:0007005"/>
    <property type="project" value="BHF-UCL"/>
</dbReference>
<dbReference type="GO" id="GO:0070062">
    <property type="term" value="C:extracellular exosome"/>
    <property type="evidence" value="ECO:0007005"/>
    <property type="project" value="UniProtKB"/>
</dbReference>
<dbReference type="GO" id="GO:0005576">
    <property type="term" value="C:extracellular region"/>
    <property type="evidence" value="ECO:0000304"/>
    <property type="project" value="Reactome"/>
</dbReference>
<dbReference type="GO" id="GO:0005615">
    <property type="term" value="C:extracellular space"/>
    <property type="evidence" value="ECO:0000318"/>
    <property type="project" value="GO_Central"/>
</dbReference>
<dbReference type="GO" id="GO:0005577">
    <property type="term" value="C:fibrinogen complex"/>
    <property type="evidence" value="ECO:0000304"/>
    <property type="project" value="ProtInc"/>
</dbReference>
<dbReference type="GO" id="GO:1904813">
    <property type="term" value="C:ficolin-1-rich granule lumen"/>
    <property type="evidence" value="ECO:0000304"/>
    <property type="project" value="Reactome"/>
</dbReference>
<dbReference type="GO" id="GO:0050687">
    <property type="term" value="P:negative regulation of defense response to virus"/>
    <property type="evidence" value="ECO:0007669"/>
    <property type="project" value="Ensembl"/>
</dbReference>
<dbReference type="GO" id="GO:0002605">
    <property type="term" value="P:negative regulation of dendritic cell antigen processing and presentation"/>
    <property type="evidence" value="ECO:0007669"/>
    <property type="project" value="Ensembl"/>
</dbReference>
<dbReference type="GO" id="GO:0002617">
    <property type="term" value="P:negative regulation of macrophage antigen processing and presentation"/>
    <property type="evidence" value="ECO:0007669"/>
    <property type="project" value="Ensembl"/>
</dbReference>
<dbReference type="GO" id="GO:0043381">
    <property type="term" value="P:negative regulation of memory T cell differentiation"/>
    <property type="evidence" value="ECO:0007669"/>
    <property type="project" value="Ensembl"/>
</dbReference>
<dbReference type="GO" id="GO:0002291">
    <property type="term" value="P:T cell activation via T cell receptor contact with antigen bound to MHC molecule on antigen presenting cell"/>
    <property type="evidence" value="ECO:0007669"/>
    <property type="project" value="Ensembl"/>
</dbReference>
<dbReference type="CDD" id="cd00087">
    <property type="entry name" value="FReD"/>
    <property type="match status" value="1"/>
</dbReference>
<dbReference type="FunFam" id="3.90.215.10:FF:000007">
    <property type="entry name" value="Fibrinogen-like 2"/>
    <property type="match status" value="1"/>
</dbReference>
<dbReference type="Gene3D" id="3.90.215.10">
    <property type="entry name" value="Gamma Fibrinogen, chain A, domain 1"/>
    <property type="match status" value="1"/>
</dbReference>
<dbReference type="InterPro" id="IPR036056">
    <property type="entry name" value="Fibrinogen-like_C"/>
</dbReference>
<dbReference type="InterPro" id="IPR014716">
    <property type="entry name" value="Fibrinogen_a/b/g_C_1"/>
</dbReference>
<dbReference type="InterPro" id="IPR002181">
    <property type="entry name" value="Fibrinogen_a/b/g_C_dom"/>
</dbReference>
<dbReference type="InterPro" id="IPR050373">
    <property type="entry name" value="Fibrinogen_C-term_domain"/>
</dbReference>
<dbReference type="InterPro" id="IPR020837">
    <property type="entry name" value="Fibrinogen_CS"/>
</dbReference>
<dbReference type="NCBIfam" id="NF040941">
    <property type="entry name" value="GGGWT_bact"/>
    <property type="match status" value="1"/>
</dbReference>
<dbReference type="PANTHER" id="PTHR19143">
    <property type="entry name" value="FIBRINOGEN/TENASCIN/ANGIOPOEITIN"/>
    <property type="match status" value="1"/>
</dbReference>
<dbReference type="PANTHER" id="PTHR19143:SF189">
    <property type="entry name" value="FIBROLEUKIN"/>
    <property type="match status" value="1"/>
</dbReference>
<dbReference type="Pfam" id="PF00147">
    <property type="entry name" value="Fibrinogen_C"/>
    <property type="match status" value="1"/>
</dbReference>
<dbReference type="SMART" id="SM00186">
    <property type="entry name" value="FBG"/>
    <property type="match status" value="1"/>
</dbReference>
<dbReference type="SUPFAM" id="SSF56496">
    <property type="entry name" value="Fibrinogen C-terminal domain-like"/>
    <property type="match status" value="1"/>
</dbReference>
<dbReference type="PROSITE" id="PS00514">
    <property type="entry name" value="FIBRINOGEN_C_1"/>
    <property type="match status" value="1"/>
</dbReference>
<dbReference type="PROSITE" id="PS51406">
    <property type="entry name" value="FIBRINOGEN_C_2"/>
    <property type="match status" value="1"/>
</dbReference>
<organism>
    <name type="scientific">Homo sapiens</name>
    <name type="common">Human</name>
    <dbReference type="NCBI Taxonomy" id="9606"/>
    <lineage>
        <taxon>Eukaryota</taxon>
        <taxon>Metazoa</taxon>
        <taxon>Chordata</taxon>
        <taxon>Craniata</taxon>
        <taxon>Vertebrata</taxon>
        <taxon>Euteleostomi</taxon>
        <taxon>Mammalia</taxon>
        <taxon>Eutheria</taxon>
        <taxon>Euarchontoglires</taxon>
        <taxon>Primates</taxon>
        <taxon>Haplorrhini</taxon>
        <taxon>Catarrhini</taxon>
        <taxon>Hominidae</taxon>
        <taxon>Homo</taxon>
    </lineage>
</organism>
<proteinExistence type="evidence at protein level"/>
<sequence length="439" mass="50229">MKLANWYWLSSAVLATYGFLVVANNETEEIKDERAKDVCPVRLESRGKCEEAGECPYQVSLPPLTIQLPKQFSRIEEVFKEVQNLKEIVNSLKKSCQDCKLQADDNGDPGRNGLLLPSTGAPGEVGDNRVRELESEVNKLSSELKNAKEEINVLHGRLEKLNLVNMNNIENYVDSKVANLTFVVNSLDGKCSKCPSQEQIQSRPVQHLIYKDCSDYYAIGKRSSETYRVTPDPKNSSFEVYCDMETMGGGWTVLQARLDGSTNFTRTWQDYKAGFGNLRREFWLGNDKIHLLTKSKEMILRIDLEDFNGVELYALYDQFYVANEFLKYRLHVGNYNGTAGDALRFNKHYNHDLKFFTTPDKDNDRYPSGNCGLYYSSGWWFDACLSANLNGKYYHQKYRGVRNGIFWGTWPGVSEAHPGGYKSSFKEAKMMIRPKHFKP</sequence>